<feature type="chain" id="PRO_0000312721" description="Zinc finger RNA-binding protein">
    <location>
        <begin position="1"/>
        <end position="1074"/>
    </location>
</feature>
<feature type="domain" description="DZF" evidence="4">
    <location>
        <begin position="703"/>
        <end position="1073"/>
    </location>
</feature>
<feature type="region of interest" description="Disordered" evidence="5">
    <location>
        <begin position="120"/>
        <end position="139"/>
    </location>
</feature>
<feature type="region of interest" description="Disordered" evidence="5">
    <location>
        <begin position="349"/>
        <end position="377"/>
    </location>
</feature>
<feature type="region of interest" description="Disordered" evidence="5">
    <location>
        <begin position="421"/>
        <end position="447"/>
    </location>
</feature>
<feature type="region of interest" description="Disordered" evidence="5">
    <location>
        <begin position="702"/>
        <end position="723"/>
    </location>
</feature>
<feature type="region of interest" description="Disordered" evidence="5">
    <location>
        <begin position="761"/>
        <end position="781"/>
    </location>
</feature>
<feature type="region of interest" description="Disordered" evidence="5">
    <location>
        <begin position="1040"/>
        <end position="1074"/>
    </location>
</feature>
<feature type="compositionally biased region" description="Low complexity" evidence="5">
    <location>
        <begin position="362"/>
        <end position="374"/>
    </location>
</feature>
<feature type="compositionally biased region" description="Low complexity" evidence="5">
    <location>
        <begin position="427"/>
        <end position="447"/>
    </location>
</feature>
<feature type="compositionally biased region" description="Basic and acidic residues" evidence="5">
    <location>
        <begin position="762"/>
        <end position="781"/>
    </location>
</feature>
<feature type="compositionally biased region" description="Basic and acidic residues" evidence="5">
    <location>
        <begin position="1062"/>
        <end position="1074"/>
    </location>
</feature>
<feature type="modified residue" description="N6-acetyllysine; alternate" evidence="3">
    <location>
        <position position="509"/>
    </location>
</feature>
<feature type="modified residue" description="N6-acetyllysine" evidence="2">
    <location>
        <position position="516"/>
    </location>
</feature>
<feature type="modified residue" description="Phosphoserine" evidence="3">
    <location>
        <position position="1054"/>
    </location>
</feature>
<feature type="cross-link" description="Glycyl lysine isopeptide (Lys-Gly) (interchain with G-Cter in SUMO2); alternate" evidence="3">
    <location>
        <position position="509"/>
    </location>
</feature>
<feature type="cross-link" description="Glycyl lysine isopeptide (Lys-Gly) (interchain with G-Cter in SUMO2)" evidence="3">
    <location>
        <position position="541"/>
    </location>
</feature>
<feature type="cross-link" description="Glycyl lysine isopeptide (Lys-Gly) (interchain with G-Cter in SUMO2)" evidence="3">
    <location>
        <position position="623"/>
    </location>
</feature>
<keyword id="KW-0007">Acetylation</keyword>
<keyword id="KW-0158">Chromosome</keyword>
<keyword id="KW-0963">Cytoplasm</keyword>
<keyword id="KW-0217">Developmental protein</keyword>
<keyword id="KW-0238">DNA-binding</keyword>
<keyword id="KW-1017">Isopeptide bond</keyword>
<keyword id="KW-0539">Nucleus</keyword>
<keyword id="KW-0597">Phosphoprotein</keyword>
<keyword id="KW-1185">Reference proteome</keyword>
<keyword id="KW-0677">Repeat</keyword>
<keyword id="KW-0694">RNA-binding</keyword>
<keyword id="KW-0832">Ubl conjugation</keyword>
<evidence type="ECO:0000250" key="1"/>
<evidence type="ECO:0000250" key="2">
    <source>
        <dbReference type="UniProtKB" id="O88532"/>
    </source>
</evidence>
<evidence type="ECO:0000250" key="3">
    <source>
        <dbReference type="UniProtKB" id="Q96KR1"/>
    </source>
</evidence>
<evidence type="ECO:0000255" key="4">
    <source>
        <dbReference type="PROSITE-ProRule" id="PRU01040"/>
    </source>
</evidence>
<evidence type="ECO:0000256" key="5">
    <source>
        <dbReference type="SAM" id="MobiDB-lite"/>
    </source>
</evidence>
<organism>
    <name type="scientific">Pongo abelii</name>
    <name type="common">Sumatran orangutan</name>
    <name type="synonym">Pongo pygmaeus abelii</name>
    <dbReference type="NCBI Taxonomy" id="9601"/>
    <lineage>
        <taxon>Eukaryota</taxon>
        <taxon>Metazoa</taxon>
        <taxon>Chordata</taxon>
        <taxon>Craniata</taxon>
        <taxon>Vertebrata</taxon>
        <taxon>Euteleostomi</taxon>
        <taxon>Mammalia</taxon>
        <taxon>Eutheria</taxon>
        <taxon>Euarchontoglires</taxon>
        <taxon>Primates</taxon>
        <taxon>Haplorrhini</taxon>
        <taxon>Catarrhini</taxon>
        <taxon>Hominidae</taxon>
        <taxon>Pongo</taxon>
    </lineage>
</organism>
<comment type="function">
    <text evidence="1">Involved in postimplantation and gastrulation stages of development. Involved in the nucleocytoplasmic shuttling of STAU2. Binds to DNA and RNA (By similarity).</text>
</comment>
<comment type="subunit">
    <text evidence="1">Found in a cytoplasmic RNP complex with STAU2. Interacts with STAU2. Does not interact with STAU1 (By similarity).</text>
</comment>
<comment type="subcellular location">
    <subcellularLocation>
        <location>Nucleus</location>
    </subcellularLocation>
    <subcellularLocation>
        <location>Cytoplasm</location>
    </subcellularLocation>
    <subcellularLocation>
        <location>Cytoplasmic granule</location>
    </subcellularLocation>
    <subcellularLocation>
        <location>Chromosome</location>
    </subcellularLocation>
    <text evidence="1">Associated with chromosome foci in meiotic cells. Localizes in somatodendritic compartment of primary hippocampal neurons. Colocalizes with STAU2 in several cytosolic RNA granules (By similarity).</text>
</comment>
<gene>
    <name type="primary">ZFR</name>
</gene>
<protein>
    <recommendedName>
        <fullName>Zinc finger RNA-binding protein</fullName>
    </recommendedName>
</protein>
<sequence>MIPICPVVSFTYVPSRLGEDAKMATGNYFGFTHSGAAAAAAAAQYSQQPASGVAYSHPTTVASYTVHQAPVAAHTVTAAYAPAAATVAVARPAPVAVAAAATAAAYGGYPTAHTATDYGYTQRQQEAPPPPPPATTQNYQDSYSYVRSTAPAVAYDSKQYYQQPTATAAAVAAAAQPQPSVAETYYQTAPKAGYSQGATQYTQAQQTRQVTAIKPATPSPATTTFSIYPVSSTVQPVAAAATVVPSYTQSATYSTTAVTYSGTSYSGYEAAVYSAASSYYQQQQQQQKQAAAAAAAAAATAAWTGTTFTKKAPFQNKQLKPKQPPKPPQIHYCDVCKISCAGPQTYKEHLEGQKHKKKEAALKASQNASSSNNSTRGTQNQLRCELCDVSCTGADAYAAHIRGAKHQKVVKLHTKLGKPIPSTEPNVVSQATSSTAVSASKPTASPSSIAANNCTVNTSSIATSSMKGLTTTGNSSLNSTSNTKVSAVPTNMAAKKTSTPKINFVGGNKLQSTGNKTEDIKGTECVKSTPVTSAVQIPEVKQDTVSEPVTPASLAVLQSDVQPVGHDYVEEVRNDEGKVIRFHCKLCECSFNDPNAKEMHLKGRRHRLQYKKKVNPDLQVEVKPSIRARKIQEEKMRKQMQREEYWRRREEEERWRMEMRRYEEDMYWRRMEEEQHHWDDRRRMPDGGYPHGPPGPLGLLGVRPGMPPQPQGPAPLRRPDSSDDRYVMTKHATIYPTEEELQAVQKIVSITERALKLVSDSLSEHEKNKNKEGDDKKEGSKDRALKGVLRVGVLAKGLLLRGDRNVNLVLLCSEKPSKTLLSRIAENLPKQLAVISPEKYDIKCAVSEAAIILNSCVEPKMQVTITLTSPIIREENMREGDVTSGMVKDPPDVLDRQKCLDALAALRHAKWFQARANGLQSCVIIIRILRDLCQRVPTWSDFPSWAMELLVEKAISSASSPQSPGDALRRVFECISSGIILKGSPGLLDPCEKDPFDTLATMTDQQREDITSSAQFALRLLAFRQIHKVLGMDPLPQMSQRFNIHNNRKRRRDSDGVDGFEAEGKKDKKDYDNF</sequence>
<accession>Q5REX3</accession>
<name>ZFR_PONAB</name>
<reference key="1">
    <citation type="submission" date="2004-11" db="EMBL/GenBank/DDBJ databases">
        <authorList>
            <consortium name="The German cDNA consortium"/>
        </authorList>
    </citation>
    <scope>NUCLEOTIDE SEQUENCE [LARGE SCALE MRNA]</scope>
    <source>
        <tissue>Brain cortex</tissue>
    </source>
</reference>
<dbReference type="EMBL" id="CR857391">
    <property type="protein sequence ID" value="CAH89684.1"/>
    <property type="molecule type" value="mRNA"/>
</dbReference>
<dbReference type="RefSeq" id="NP_001124762.1">
    <property type="nucleotide sequence ID" value="NM_001131290.1"/>
</dbReference>
<dbReference type="SMR" id="Q5REX3"/>
<dbReference type="FunCoup" id="Q5REX3">
    <property type="interactions" value="3862"/>
</dbReference>
<dbReference type="STRING" id="9601.ENSPPYP00000017176"/>
<dbReference type="GeneID" id="100171613"/>
<dbReference type="KEGG" id="pon:100171613"/>
<dbReference type="CTD" id="51663"/>
<dbReference type="eggNOG" id="KOG3792">
    <property type="taxonomic scope" value="Eukaryota"/>
</dbReference>
<dbReference type="InParanoid" id="Q5REX3"/>
<dbReference type="OrthoDB" id="8898434at2759"/>
<dbReference type="Proteomes" id="UP000001595">
    <property type="component" value="Unplaced"/>
</dbReference>
<dbReference type="GO" id="GO:0005694">
    <property type="term" value="C:chromosome"/>
    <property type="evidence" value="ECO:0007669"/>
    <property type="project" value="UniProtKB-SubCell"/>
</dbReference>
<dbReference type="GO" id="GO:0005737">
    <property type="term" value="C:cytoplasm"/>
    <property type="evidence" value="ECO:0007669"/>
    <property type="project" value="UniProtKB-SubCell"/>
</dbReference>
<dbReference type="GO" id="GO:0071011">
    <property type="term" value="C:precatalytic spliceosome"/>
    <property type="evidence" value="ECO:0007669"/>
    <property type="project" value="TreeGrafter"/>
</dbReference>
<dbReference type="GO" id="GO:0003677">
    <property type="term" value="F:DNA binding"/>
    <property type="evidence" value="ECO:0007669"/>
    <property type="project" value="UniProtKB-KW"/>
</dbReference>
<dbReference type="GO" id="GO:0003725">
    <property type="term" value="F:double-stranded RNA binding"/>
    <property type="evidence" value="ECO:0007669"/>
    <property type="project" value="TreeGrafter"/>
</dbReference>
<dbReference type="GO" id="GO:0003727">
    <property type="term" value="F:single-stranded RNA binding"/>
    <property type="evidence" value="ECO:0007669"/>
    <property type="project" value="TreeGrafter"/>
</dbReference>
<dbReference type="GO" id="GO:0008270">
    <property type="term" value="F:zinc ion binding"/>
    <property type="evidence" value="ECO:0007669"/>
    <property type="project" value="InterPro"/>
</dbReference>
<dbReference type="FunFam" id="1.10.1410.40:FF:000001">
    <property type="entry name" value="interleukin enhancer-binding factor 3 isoform X1"/>
    <property type="match status" value="1"/>
</dbReference>
<dbReference type="FunFam" id="3.30.160.60:FF:000153">
    <property type="entry name" value="Zinc finger RNA-binding protein 2"/>
    <property type="match status" value="1"/>
</dbReference>
<dbReference type="FunFam" id="3.30.160.60:FF:000210">
    <property type="entry name" value="Zinc finger RNA-binding protein 2"/>
    <property type="match status" value="1"/>
</dbReference>
<dbReference type="FunFam" id="3.30.160.60:FF:000439">
    <property type="entry name" value="Zinc finger RNA-binding protein 2"/>
    <property type="match status" value="1"/>
</dbReference>
<dbReference type="FunFam" id="3.30.460.10:FF:000010">
    <property type="entry name" value="Zinc finger RNA-binding protein 2"/>
    <property type="match status" value="1"/>
</dbReference>
<dbReference type="Gene3D" id="1.10.1410.40">
    <property type="match status" value="1"/>
</dbReference>
<dbReference type="Gene3D" id="3.30.460.10">
    <property type="entry name" value="Beta Polymerase, domain 2"/>
    <property type="match status" value="1"/>
</dbReference>
<dbReference type="Gene3D" id="3.30.160.60">
    <property type="entry name" value="Classic Zinc Finger"/>
    <property type="match status" value="3"/>
</dbReference>
<dbReference type="InterPro" id="IPR006561">
    <property type="entry name" value="DZF_dom"/>
</dbReference>
<dbReference type="InterPro" id="IPR049402">
    <property type="entry name" value="DZF_dom_C"/>
</dbReference>
<dbReference type="InterPro" id="IPR049401">
    <property type="entry name" value="DZF_dom_N"/>
</dbReference>
<dbReference type="InterPro" id="IPR003604">
    <property type="entry name" value="Matrin/U1-like-C_Znf_C2H2"/>
</dbReference>
<dbReference type="InterPro" id="IPR043519">
    <property type="entry name" value="NT_sf"/>
</dbReference>
<dbReference type="InterPro" id="IPR036236">
    <property type="entry name" value="Znf_C2H2_sf"/>
</dbReference>
<dbReference type="InterPro" id="IPR013087">
    <property type="entry name" value="Znf_C2H2_type"/>
</dbReference>
<dbReference type="PANTHER" id="PTHR45762">
    <property type="entry name" value="ZINC FINGER RNA-BINDING PROTEIN"/>
    <property type="match status" value="1"/>
</dbReference>
<dbReference type="PANTHER" id="PTHR45762:SF21">
    <property type="entry name" value="ZINC FINGER RNA-BINDING PROTEIN"/>
    <property type="match status" value="1"/>
</dbReference>
<dbReference type="Pfam" id="PF20965">
    <property type="entry name" value="DZF_C"/>
    <property type="match status" value="1"/>
</dbReference>
<dbReference type="Pfam" id="PF07528">
    <property type="entry name" value="DZF_N"/>
    <property type="match status" value="1"/>
</dbReference>
<dbReference type="Pfam" id="PF12874">
    <property type="entry name" value="zf-met"/>
    <property type="match status" value="3"/>
</dbReference>
<dbReference type="SMART" id="SM00572">
    <property type="entry name" value="DZF"/>
    <property type="match status" value="1"/>
</dbReference>
<dbReference type="SMART" id="SM00355">
    <property type="entry name" value="ZnF_C2H2"/>
    <property type="match status" value="3"/>
</dbReference>
<dbReference type="SMART" id="SM00451">
    <property type="entry name" value="ZnF_U1"/>
    <property type="match status" value="3"/>
</dbReference>
<dbReference type="SUPFAM" id="SSF57667">
    <property type="entry name" value="beta-beta-alpha zinc fingers"/>
    <property type="match status" value="3"/>
</dbReference>
<dbReference type="PROSITE" id="PS51703">
    <property type="entry name" value="DZF"/>
    <property type="match status" value="1"/>
</dbReference>
<dbReference type="PROSITE" id="PS00028">
    <property type="entry name" value="ZINC_FINGER_C2H2_1"/>
    <property type="match status" value="3"/>
</dbReference>
<proteinExistence type="evidence at transcript level"/>